<name>CYST_ECOLI</name>
<dbReference type="EMBL" id="M32101">
    <property type="protein sequence ID" value="AAA23637.1"/>
    <property type="molecule type" value="Genomic_DNA"/>
</dbReference>
<dbReference type="EMBL" id="U00096">
    <property type="protein sequence ID" value="AAC75477.1"/>
    <property type="molecule type" value="Genomic_DNA"/>
</dbReference>
<dbReference type="EMBL" id="AP009048">
    <property type="protein sequence ID" value="BAA16298.1"/>
    <property type="molecule type" value="Genomic_DNA"/>
</dbReference>
<dbReference type="PIR" id="A35402">
    <property type="entry name" value="QRECST"/>
</dbReference>
<dbReference type="RefSeq" id="NP_416919.1">
    <property type="nucleotide sequence ID" value="NC_000913.3"/>
</dbReference>
<dbReference type="RefSeq" id="WP_000458406.1">
    <property type="nucleotide sequence ID" value="NZ_SSUR01000044.1"/>
</dbReference>
<dbReference type="SMR" id="P16701"/>
<dbReference type="BioGRID" id="4263208">
    <property type="interactions" value="7"/>
</dbReference>
<dbReference type="ComplexPortal" id="CPX-4385">
    <property type="entry name" value="Sulfate/thiosulfate ABC transporter complex, cypP variant"/>
</dbReference>
<dbReference type="ComplexPortal" id="CPX-4386">
    <property type="entry name" value="Sulfate/thiosulfate ABC transporter complex, sbp variant"/>
</dbReference>
<dbReference type="FunCoup" id="P16701">
    <property type="interactions" value="360"/>
</dbReference>
<dbReference type="STRING" id="511145.b2424"/>
<dbReference type="TCDB" id="3.A.1.6.1">
    <property type="family name" value="the atp-binding cassette (abc) superfamily"/>
</dbReference>
<dbReference type="PaxDb" id="511145-b2424"/>
<dbReference type="EnsemblBacteria" id="AAC75477">
    <property type="protein sequence ID" value="AAC75477"/>
    <property type="gene ID" value="b2424"/>
</dbReference>
<dbReference type="GeneID" id="93774707"/>
<dbReference type="GeneID" id="946882"/>
<dbReference type="KEGG" id="ecj:JW2417"/>
<dbReference type="KEGG" id="eco:b2424"/>
<dbReference type="KEGG" id="ecoc:C3026_13470"/>
<dbReference type="PATRIC" id="fig|1411691.4.peg.4307"/>
<dbReference type="EchoBASE" id="EB0194"/>
<dbReference type="eggNOG" id="COG0555">
    <property type="taxonomic scope" value="Bacteria"/>
</dbReference>
<dbReference type="HOGENOM" id="CLU_016047_14_0_6"/>
<dbReference type="InParanoid" id="P16701"/>
<dbReference type="OMA" id="NIAWQTE"/>
<dbReference type="OrthoDB" id="9804629at2"/>
<dbReference type="PhylomeDB" id="P16701"/>
<dbReference type="BioCyc" id="EcoCyc:CYST-MONOMER"/>
<dbReference type="BioCyc" id="MetaCyc:CYST-MONOMER"/>
<dbReference type="PRO" id="PR:P16701"/>
<dbReference type="Proteomes" id="UP000000625">
    <property type="component" value="Chromosome"/>
</dbReference>
<dbReference type="GO" id="GO:0035796">
    <property type="term" value="C:ATP-binding cassette (ABC) transporter complex, transmembrane substrate-binding subunit-containing"/>
    <property type="evidence" value="ECO:0000303"/>
    <property type="project" value="ComplexPortal"/>
</dbReference>
<dbReference type="GO" id="GO:0016020">
    <property type="term" value="C:membrane"/>
    <property type="evidence" value="ECO:0000303"/>
    <property type="project" value="ComplexPortal"/>
</dbReference>
<dbReference type="GO" id="GO:0005886">
    <property type="term" value="C:plasma membrane"/>
    <property type="evidence" value="ECO:0000314"/>
    <property type="project" value="EcoCyc"/>
</dbReference>
<dbReference type="GO" id="GO:0015419">
    <property type="term" value="F:ABC-type sulfate transporter activity"/>
    <property type="evidence" value="ECO:0007669"/>
    <property type="project" value="InterPro"/>
</dbReference>
<dbReference type="GO" id="GO:1902358">
    <property type="term" value="P:sulfate transmembrane transport"/>
    <property type="evidence" value="ECO:0000303"/>
    <property type="project" value="ComplexPortal"/>
</dbReference>
<dbReference type="GO" id="GO:0015709">
    <property type="term" value="P:thiosulfate transport"/>
    <property type="evidence" value="ECO:0000303"/>
    <property type="project" value="ComplexPortal"/>
</dbReference>
<dbReference type="CDD" id="cd06261">
    <property type="entry name" value="TM_PBP2"/>
    <property type="match status" value="1"/>
</dbReference>
<dbReference type="FunFam" id="1.10.3720.10:FF:000004">
    <property type="entry name" value="Sulfate transport system permease protein CysT"/>
    <property type="match status" value="1"/>
</dbReference>
<dbReference type="Gene3D" id="1.10.3720.10">
    <property type="entry name" value="MetI-like"/>
    <property type="match status" value="1"/>
</dbReference>
<dbReference type="InterPro" id="IPR011865">
    <property type="entry name" value="CysT_permease"/>
</dbReference>
<dbReference type="InterPro" id="IPR000515">
    <property type="entry name" value="MetI-like"/>
</dbReference>
<dbReference type="InterPro" id="IPR035906">
    <property type="entry name" value="MetI-like_sf"/>
</dbReference>
<dbReference type="InterPro" id="IPR005667">
    <property type="entry name" value="Sulph_transpt2"/>
</dbReference>
<dbReference type="NCBIfam" id="TIGR00969">
    <property type="entry name" value="3a0106s02"/>
    <property type="match status" value="1"/>
</dbReference>
<dbReference type="NCBIfam" id="TIGR02139">
    <property type="entry name" value="permease_CysT"/>
    <property type="match status" value="1"/>
</dbReference>
<dbReference type="NCBIfam" id="NF008208">
    <property type="entry name" value="PRK10971.1"/>
    <property type="match status" value="1"/>
</dbReference>
<dbReference type="PANTHER" id="PTHR30406">
    <property type="entry name" value="SULFATE TRANSPORT SYSTEM PERMEASE PROTEIN"/>
    <property type="match status" value="1"/>
</dbReference>
<dbReference type="PANTHER" id="PTHR30406:SF10">
    <property type="entry name" value="SULFATE TRANSPORT SYSTEM PERMEASE PROTEIN CYST"/>
    <property type="match status" value="1"/>
</dbReference>
<dbReference type="Pfam" id="PF00528">
    <property type="entry name" value="BPD_transp_1"/>
    <property type="match status" value="1"/>
</dbReference>
<dbReference type="SUPFAM" id="SSF161098">
    <property type="entry name" value="MetI-like"/>
    <property type="match status" value="1"/>
</dbReference>
<dbReference type="PROSITE" id="PS50928">
    <property type="entry name" value="ABC_TM1"/>
    <property type="match status" value="1"/>
</dbReference>
<gene>
    <name type="primary">cysU</name>
    <name type="synonym">cysT</name>
    <name type="ordered locus">b2424</name>
    <name type="ordered locus">JW2417</name>
</gene>
<keyword id="KW-0997">Cell inner membrane</keyword>
<keyword id="KW-1003">Cell membrane</keyword>
<keyword id="KW-0472">Membrane</keyword>
<keyword id="KW-1185">Reference proteome</keyword>
<keyword id="KW-0764">Sulfate transport</keyword>
<keyword id="KW-0812">Transmembrane</keyword>
<keyword id="KW-1133">Transmembrane helix</keyword>
<keyword id="KW-0813">Transport</keyword>
<sequence>MFAVSSRRVLPGFTLSLGTSLLFVCLILLLPLSALVMQLAQMSWAQYWEVITNPQVVAAYKVTLLSAFVASIFNGVFGLLMAWILTRYRFPGRTLLDALMDLPFALPTAVAGLTLASLFSVNGFYGEWLAKFDIKVTYTWLGIAVAMAFTSIPFVVRTVQPVLEELGPEYEEAAETLGATRWQSFCKVVLPELSPALVAGVALSFTRSLGEFGAVIFIAGNIAWKTEVTSLMIFVRLQEFDYPAASAIASVILAASLLLLFSINTLQSRFGRRVVGH</sequence>
<organism>
    <name type="scientific">Escherichia coli (strain K12)</name>
    <dbReference type="NCBI Taxonomy" id="83333"/>
    <lineage>
        <taxon>Bacteria</taxon>
        <taxon>Pseudomonadati</taxon>
        <taxon>Pseudomonadota</taxon>
        <taxon>Gammaproteobacteria</taxon>
        <taxon>Enterobacterales</taxon>
        <taxon>Enterobacteriaceae</taxon>
        <taxon>Escherichia</taxon>
    </lineage>
</organism>
<feature type="chain" id="PRO_0000059989" description="Sulfate transport system permease protein CysT">
    <location>
        <begin position="1"/>
        <end position="277"/>
    </location>
</feature>
<feature type="transmembrane region" description="Helical" evidence="1">
    <location>
        <begin position="17"/>
        <end position="37"/>
    </location>
</feature>
<feature type="transmembrane region" description="Helical" evidence="1">
    <location>
        <begin position="64"/>
        <end position="84"/>
    </location>
</feature>
<feature type="transmembrane region" description="Helical" evidence="1">
    <location>
        <begin position="99"/>
        <end position="119"/>
    </location>
</feature>
<feature type="transmembrane region" description="Helical" evidence="1">
    <location>
        <begin position="136"/>
        <end position="156"/>
    </location>
</feature>
<feature type="transmembrane region" description="Helical" evidence="1">
    <location>
        <begin position="185"/>
        <end position="205"/>
    </location>
</feature>
<feature type="transmembrane region" description="Helical" evidence="1">
    <location>
        <begin position="215"/>
        <end position="235"/>
    </location>
</feature>
<feature type="transmembrane region" description="Helical" evidence="1">
    <location>
        <begin position="243"/>
        <end position="263"/>
    </location>
</feature>
<feature type="domain" description="ABC transmembrane type-1" evidence="1">
    <location>
        <begin position="60"/>
        <end position="263"/>
    </location>
</feature>
<feature type="sequence conflict" description="In Ref. 5." evidence="3" ref="5">
    <original>E</original>
    <variation>F</variation>
    <location>
        <position position="127"/>
    </location>
</feature>
<accession>P16701</accession>
<protein>
    <recommendedName>
        <fullName>Sulfate transport system permease protein CysT</fullName>
    </recommendedName>
</protein>
<comment type="function">
    <text>Part of the ABC transporter complex CysAWTP (TC 3.A.1.6.1) involved in sulfate/thiosulfate import. Probably responsible for the translocation of the substrate across the membrane.</text>
</comment>
<comment type="subunit">
    <text evidence="3">The complex is composed of two ATP-binding proteins (CysA), two transmembrane proteins (CysT and CysW) and a solute-binding protein (CysP).</text>
</comment>
<comment type="subcellular location">
    <subcellularLocation>
        <location evidence="2">Cell inner membrane</location>
        <topology evidence="1 2">Multi-pass membrane protein</topology>
    </subcellularLocation>
</comment>
<comment type="similarity">
    <text evidence="3">Belongs to the binding-protein-dependent transport system permease family. CysTW subfamily.</text>
</comment>
<evidence type="ECO:0000255" key="1">
    <source>
        <dbReference type="PROSITE-ProRule" id="PRU00441"/>
    </source>
</evidence>
<evidence type="ECO:0000269" key="2">
    <source>
    </source>
</evidence>
<evidence type="ECO:0000305" key="3"/>
<proteinExistence type="inferred from homology"/>
<reference key="1">
    <citation type="journal article" date="1990" name="J. Bacteriol.">
        <title>Sulfate and thiosulfate transport in Escherichia coli K-12: nucleotide sequence and expression of the cysTWAM gene cluster.</title>
        <authorList>
            <person name="Sirko A."/>
            <person name="Hryniewicz M.M."/>
            <person name="Hulanicka D.M."/>
            <person name="Boeck A."/>
        </authorList>
    </citation>
    <scope>NUCLEOTIDE SEQUENCE [GENOMIC DNA]</scope>
    <source>
        <strain>K12</strain>
    </source>
</reference>
<reference key="2">
    <citation type="journal article" date="1997" name="DNA Res.">
        <title>Construction of a contiguous 874-kb sequence of the Escherichia coli-K12 genome corresponding to 50.0-68.8 min on the linkage map and analysis of its sequence features.</title>
        <authorList>
            <person name="Yamamoto Y."/>
            <person name="Aiba H."/>
            <person name="Baba T."/>
            <person name="Hayashi K."/>
            <person name="Inada T."/>
            <person name="Isono K."/>
            <person name="Itoh T."/>
            <person name="Kimura S."/>
            <person name="Kitagawa M."/>
            <person name="Makino K."/>
            <person name="Miki T."/>
            <person name="Mitsuhashi N."/>
            <person name="Mizobuchi K."/>
            <person name="Mori H."/>
            <person name="Nakade S."/>
            <person name="Nakamura Y."/>
            <person name="Nashimoto H."/>
            <person name="Oshima T."/>
            <person name="Oyama S."/>
            <person name="Saito N."/>
            <person name="Sampei G."/>
            <person name="Satoh Y."/>
            <person name="Sivasundaram S."/>
            <person name="Tagami H."/>
            <person name="Takahashi H."/>
            <person name="Takeda J."/>
            <person name="Takemoto K."/>
            <person name="Uehara K."/>
            <person name="Wada C."/>
            <person name="Yamagata S."/>
            <person name="Horiuchi T."/>
        </authorList>
    </citation>
    <scope>NUCLEOTIDE SEQUENCE [LARGE SCALE GENOMIC DNA]</scope>
    <source>
        <strain>K12 / W3110 / ATCC 27325 / DSM 5911</strain>
    </source>
</reference>
<reference key="3">
    <citation type="journal article" date="1997" name="Science">
        <title>The complete genome sequence of Escherichia coli K-12.</title>
        <authorList>
            <person name="Blattner F.R."/>
            <person name="Plunkett G. III"/>
            <person name="Bloch C.A."/>
            <person name="Perna N.T."/>
            <person name="Burland V."/>
            <person name="Riley M."/>
            <person name="Collado-Vides J."/>
            <person name="Glasner J.D."/>
            <person name="Rode C.K."/>
            <person name="Mayhew G.F."/>
            <person name="Gregor J."/>
            <person name="Davis N.W."/>
            <person name="Kirkpatrick H.A."/>
            <person name="Goeden M.A."/>
            <person name="Rose D.J."/>
            <person name="Mau B."/>
            <person name="Shao Y."/>
        </authorList>
    </citation>
    <scope>NUCLEOTIDE SEQUENCE [LARGE SCALE GENOMIC DNA]</scope>
    <source>
        <strain>K12 / MG1655 / ATCC 47076</strain>
    </source>
</reference>
<reference key="4">
    <citation type="journal article" date="2006" name="Mol. Syst. Biol.">
        <title>Highly accurate genome sequences of Escherichia coli K-12 strains MG1655 and W3110.</title>
        <authorList>
            <person name="Hayashi K."/>
            <person name="Morooka N."/>
            <person name="Yamamoto Y."/>
            <person name="Fujita K."/>
            <person name="Isono K."/>
            <person name="Choi S."/>
            <person name="Ohtsubo E."/>
            <person name="Baba T."/>
            <person name="Wanner B.L."/>
            <person name="Mori H."/>
            <person name="Horiuchi T."/>
        </authorList>
    </citation>
    <scope>NUCLEOTIDE SEQUENCE [LARGE SCALE GENOMIC DNA]</scope>
    <source>
        <strain>K12 / W3110 / ATCC 27325 / DSM 5911</strain>
    </source>
</reference>
<reference key="5">
    <citation type="journal article" date="1990" name="J. Bacteriol.">
        <title>Sulfate and thiosulfate transport in Escherichia coli K-12: identification of a gene encoding a novel protein involved in thiosulfate binding.</title>
        <authorList>
            <person name="Hryniewicz M.M."/>
            <person name="Sirko A."/>
            <person name="Palucha A."/>
            <person name="Boeck A."/>
            <person name="Hulanicka D.M."/>
        </authorList>
    </citation>
    <scope>NUCLEOTIDE SEQUENCE [GENOMIC DNA] OF 1-133</scope>
</reference>
<reference key="6">
    <citation type="journal article" date="2005" name="Science">
        <title>Global topology analysis of the Escherichia coli inner membrane proteome.</title>
        <authorList>
            <person name="Daley D.O."/>
            <person name="Rapp M."/>
            <person name="Granseth E."/>
            <person name="Melen K."/>
            <person name="Drew D."/>
            <person name="von Heijne G."/>
        </authorList>
    </citation>
    <scope>SUBCELLULAR LOCATION</scope>
    <source>
        <strain>K12 / MG1655 / ATCC 47076</strain>
    </source>
</reference>